<organism>
    <name type="scientific">Thermostichus vulcanus</name>
    <name type="common">Synechococcus vulcanus</name>
    <dbReference type="NCBI Taxonomy" id="32053"/>
    <lineage>
        <taxon>Bacteria</taxon>
        <taxon>Bacillati</taxon>
        <taxon>Cyanobacteriota</taxon>
        <taxon>Cyanophyceae</taxon>
        <taxon>Thermostichales</taxon>
        <taxon>Thermostichaceae</taxon>
        <taxon>Thermostichus</taxon>
    </lineage>
</organism>
<accession>P0A422</accession>
<accession>P20452</accession>
<accession>P20899</accession>
<proteinExistence type="evidence at protein level"/>
<name>PSAD_THEVL</name>
<sequence length="139" mass="15371">MTTLTGQPPLYGGSTGGLLSAADTEEKYAITWTSPKEQVFEMPTAGAAVMREGENLVYFARKEQCLALAAQQLRPRKINDYKIYRIFPDGETVLIHPKDGVFPEKVNKGREAVNSVPRSIGQNPNPSQLKFTGKKPYDP</sequence>
<dbReference type="EMBL" id="D17355">
    <property type="protein sequence ID" value="BAA04174.1"/>
    <property type="molecule type" value="Genomic_DNA"/>
</dbReference>
<dbReference type="PIR" id="S05218">
    <property type="entry name" value="S05218"/>
</dbReference>
<dbReference type="PDB" id="6K33">
    <property type="method" value="EM"/>
    <property type="resolution" value="2.74 A"/>
    <property type="chains" value="aD/bD/cD=2-139"/>
</dbReference>
<dbReference type="PDBsum" id="6K33"/>
<dbReference type="EMDB" id="EMD-9908"/>
<dbReference type="SMR" id="P0A422"/>
<dbReference type="GO" id="GO:0009538">
    <property type="term" value="C:photosystem I reaction center"/>
    <property type="evidence" value="ECO:0007669"/>
    <property type="project" value="InterPro"/>
</dbReference>
<dbReference type="GO" id="GO:0015979">
    <property type="term" value="P:photosynthesis"/>
    <property type="evidence" value="ECO:0007669"/>
    <property type="project" value="UniProtKB-KW"/>
</dbReference>
<dbReference type="Gene3D" id="3.30.1470.10">
    <property type="entry name" value="Photosystem I PsaD, reaction center subunit II"/>
    <property type="match status" value="1"/>
</dbReference>
<dbReference type="InterPro" id="IPR003685">
    <property type="entry name" value="PsaD"/>
</dbReference>
<dbReference type="InterPro" id="IPR036579">
    <property type="entry name" value="PsaD_sf"/>
</dbReference>
<dbReference type="PANTHER" id="PTHR31982:SF5">
    <property type="entry name" value="PHOTOSYSTEM I REACTION CENTER SUBUNIT II, CHLOROPLASTIC"/>
    <property type="match status" value="1"/>
</dbReference>
<dbReference type="PANTHER" id="PTHR31982">
    <property type="entry name" value="PHOTOSYSTEM I REACTION CENTER SUBUNIT II-1, CHLOROPLASTIC-RELATED"/>
    <property type="match status" value="1"/>
</dbReference>
<dbReference type="Pfam" id="PF02531">
    <property type="entry name" value="PsaD"/>
    <property type="match status" value="1"/>
</dbReference>
<dbReference type="SUPFAM" id="SSF64234">
    <property type="entry name" value="Photosystem I subunit PsaD"/>
    <property type="match status" value="1"/>
</dbReference>
<keyword id="KW-0002">3D-structure</keyword>
<keyword id="KW-0903">Direct protein sequencing</keyword>
<keyword id="KW-0602">Photosynthesis</keyword>
<keyword id="KW-0603">Photosystem I</keyword>
<comment type="function">
    <text>PsaD can form complexes with ferredoxin and ferredoxin-oxidoreductase in photosystem I (PS I) reaction center.</text>
</comment>
<comment type="similarity">
    <text evidence="3">Belongs to the PsaD family.</text>
</comment>
<gene>
    <name type="primary">psaD</name>
</gene>
<reference key="1">
    <citation type="submission" date="1994-11" db="EMBL/GenBank/DDBJ databases">
        <authorList>
            <person name="Shichijyo S."/>
            <person name="Hiyama T."/>
        </authorList>
    </citation>
    <scope>NUCLEOTIDE SEQUENCE [GENOMIC DNA]</scope>
</reference>
<reference key="2">
    <citation type="journal article" date="1989" name="FEBS Lett.">
        <title>Identification of photosystem I components from the cyanobacterium, Synechococcus vulcanus by N-terminal sequencing.</title>
        <authorList>
            <person name="Koike H."/>
            <person name="Ikeuchi M."/>
            <person name="Hiyama T."/>
            <person name="Inoue Y."/>
        </authorList>
    </citation>
    <scope>PROTEIN SEQUENCE OF 2-30</scope>
</reference>
<protein>
    <recommendedName>
        <fullName>Photosystem I reaction center subunit II</fullName>
    </recommendedName>
    <alternativeName>
        <fullName>Photosystem I 16 kDa polypeptide</fullName>
        <shortName>PSI-D</shortName>
    </alternativeName>
</protein>
<feature type="initiator methionine" description="Removed" evidence="2">
    <location>
        <position position="1"/>
    </location>
</feature>
<feature type="chain" id="PRO_0000206056" description="Photosystem I reaction center subunit II">
    <location>
        <begin position="2"/>
        <end position="139"/>
    </location>
</feature>
<feature type="region of interest" description="Disordered" evidence="1">
    <location>
        <begin position="113"/>
        <end position="139"/>
    </location>
</feature>
<feature type="compositionally biased region" description="Polar residues" evidence="1">
    <location>
        <begin position="116"/>
        <end position="130"/>
    </location>
</feature>
<feature type="sequence conflict" description="In Ref. 2; AA sequence." evidence="3" ref="2">
    <location>
        <position position="22"/>
    </location>
</feature>
<evidence type="ECO:0000256" key="1">
    <source>
        <dbReference type="SAM" id="MobiDB-lite"/>
    </source>
</evidence>
<evidence type="ECO:0000269" key="2">
    <source>
    </source>
</evidence>
<evidence type="ECO:0000305" key="3"/>